<proteinExistence type="predicted"/>
<accession>P16738</accession>
<organism>
    <name type="scientific">Human cytomegalovirus (strain AD169)</name>
    <name type="common">HHV-5</name>
    <name type="synonym">Human herpesvirus 5</name>
    <dbReference type="NCBI Taxonomy" id="10360"/>
    <lineage>
        <taxon>Viruses</taxon>
        <taxon>Duplodnaviria</taxon>
        <taxon>Heunggongvirae</taxon>
        <taxon>Peploviricota</taxon>
        <taxon>Herviviricetes</taxon>
        <taxon>Herpesvirales</taxon>
        <taxon>Orthoherpesviridae</taxon>
        <taxon>Betaherpesvirinae</taxon>
        <taxon>Cytomegalovirus</taxon>
        <taxon>Cytomegalovirus humanbeta5</taxon>
        <taxon>Human cytomegalovirus</taxon>
    </lineage>
</organism>
<organismHost>
    <name type="scientific">Homo sapiens</name>
    <name type="common">Human</name>
    <dbReference type="NCBI Taxonomy" id="9606"/>
</organismHost>
<name>UL109_HCMVA</name>
<dbReference type="EMBL" id="X17403">
    <property type="protein sequence ID" value="CAA35347.1"/>
    <property type="molecule type" value="Genomic_DNA"/>
</dbReference>
<dbReference type="PIR" id="S09876">
    <property type="entry name" value="S09876"/>
</dbReference>
<dbReference type="Proteomes" id="UP000008991">
    <property type="component" value="Segment"/>
</dbReference>
<sequence length="98" mass="11709">MIHDYHWRRGKRRKLIVMMETRMMIIMMTIKPPHDIYREQQNHHDDETKRSTKHCVTATHPWPRPAASCFRCPLRGGHHRRRPACALPHGWSVMNSCS</sequence>
<feature type="chain" id="PRO_0000115348" description="Uncharacterized protein UL109">
    <location>
        <begin position="1"/>
        <end position="98"/>
    </location>
</feature>
<reference key="1">
    <citation type="journal article" date="1990" name="Curr. Top. Microbiol. Immunol.">
        <title>Analysis of the protein-coding content of the sequence of human cytomegalovirus strain AD169.</title>
        <authorList>
            <person name="Chee M.S."/>
            <person name="Bankier A.T."/>
            <person name="Beck S."/>
            <person name="Bohni R."/>
            <person name="Brown C.M."/>
            <person name="Cerny R."/>
            <person name="Horsnell T."/>
            <person name="Hutchison C.A. III"/>
            <person name="Kouzarides T."/>
            <person name="Martignetti J.A."/>
            <person name="Preddie E."/>
            <person name="Satchwell S.C."/>
            <person name="Tomlinson P."/>
            <person name="Weston K.M."/>
            <person name="Barrell B.G."/>
        </authorList>
    </citation>
    <scope>NUCLEOTIDE SEQUENCE [LARGE SCALE GENOMIC DNA]</scope>
</reference>
<protein>
    <recommendedName>
        <fullName>Uncharacterized protein UL109</fullName>
    </recommendedName>
</protein>
<gene>
    <name type="primary">UL109</name>
</gene>